<accession>Q1IX85</accession>
<keyword id="KW-0479">Metal-binding</keyword>
<keyword id="KW-0687">Ribonucleoprotein</keyword>
<keyword id="KW-0689">Ribosomal protein</keyword>
<keyword id="KW-0694">RNA-binding</keyword>
<keyword id="KW-0699">rRNA-binding</keyword>
<keyword id="KW-0862">Zinc</keyword>
<feature type="chain" id="PRO_0000269095" description="Small ribosomal subunit protein uS14">
    <location>
        <begin position="1"/>
        <end position="61"/>
    </location>
</feature>
<feature type="binding site" evidence="1">
    <location>
        <position position="24"/>
    </location>
    <ligand>
        <name>Zn(2+)</name>
        <dbReference type="ChEBI" id="CHEBI:29105"/>
    </ligand>
</feature>
<feature type="binding site" evidence="1">
    <location>
        <position position="27"/>
    </location>
    <ligand>
        <name>Zn(2+)</name>
        <dbReference type="ChEBI" id="CHEBI:29105"/>
    </ligand>
</feature>
<feature type="binding site" evidence="1">
    <location>
        <position position="40"/>
    </location>
    <ligand>
        <name>Zn(2+)</name>
        <dbReference type="ChEBI" id="CHEBI:29105"/>
    </ligand>
</feature>
<feature type="binding site" evidence="1">
    <location>
        <position position="43"/>
    </location>
    <ligand>
        <name>Zn(2+)</name>
        <dbReference type="ChEBI" id="CHEBI:29105"/>
    </ligand>
</feature>
<comment type="function">
    <text evidence="1">Binds 16S rRNA, required for the assembly of 30S particles and may also be responsible for determining the conformation of the 16S rRNA at the A site.</text>
</comment>
<comment type="cofactor">
    <cofactor evidence="1">
        <name>Zn(2+)</name>
        <dbReference type="ChEBI" id="CHEBI:29105"/>
    </cofactor>
    <text evidence="1">Binds 1 zinc ion per subunit.</text>
</comment>
<comment type="subunit">
    <text evidence="1">Part of the 30S ribosomal subunit. Contacts proteins S3 and S10.</text>
</comment>
<comment type="similarity">
    <text evidence="1">Belongs to the universal ribosomal protein uS14 family. Zinc-binding uS14 subfamily.</text>
</comment>
<gene>
    <name evidence="1" type="primary">rpsZ</name>
    <name evidence="1" type="synonym">rpsN</name>
    <name type="ordered locus">Dgeo_1854</name>
</gene>
<organism>
    <name type="scientific">Deinococcus geothermalis (strain DSM 11300 / CIP 105573 / AG-3a)</name>
    <dbReference type="NCBI Taxonomy" id="319795"/>
    <lineage>
        <taxon>Bacteria</taxon>
        <taxon>Thermotogati</taxon>
        <taxon>Deinococcota</taxon>
        <taxon>Deinococci</taxon>
        <taxon>Deinococcales</taxon>
        <taxon>Deinococcaceae</taxon>
        <taxon>Deinococcus</taxon>
    </lineage>
</organism>
<protein>
    <recommendedName>
        <fullName evidence="1">Small ribosomal subunit protein uS14</fullName>
    </recommendedName>
    <alternativeName>
        <fullName evidence="2">30S ribosomal protein S14 type Z</fullName>
    </alternativeName>
</protein>
<proteinExistence type="inferred from homology"/>
<evidence type="ECO:0000255" key="1">
    <source>
        <dbReference type="HAMAP-Rule" id="MF_01364"/>
    </source>
</evidence>
<evidence type="ECO:0000305" key="2"/>
<dbReference type="EMBL" id="CP000359">
    <property type="protein sequence ID" value="ABF46149.1"/>
    <property type="molecule type" value="Genomic_DNA"/>
</dbReference>
<dbReference type="RefSeq" id="WP_011530979.1">
    <property type="nucleotide sequence ID" value="NC_008025.1"/>
</dbReference>
<dbReference type="SMR" id="Q1IX85"/>
<dbReference type="STRING" id="319795.Dgeo_1854"/>
<dbReference type="KEGG" id="dge:Dgeo_1854"/>
<dbReference type="eggNOG" id="COG0199">
    <property type="taxonomic scope" value="Bacteria"/>
</dbReference>
<dbReference type="HOGENOM" id="CLU_139869_3_0_0"/>
<dbReference type="Proteomes" id="UP000002431">
    <property type="component" value="Chromosome"/>
</dbReference>
<dbReference type="GO" id="GO:0005737">
    <property type="term" value="C:cytoplasm"/>
    <property type="evidence" value="ECO:0007669"/>
    <property type="project" value="UniProtKB-ARBA"/>
</dbReference>
<dbReference type="GO" id="GO:0015935">
    <property type="term" value="C:small ribosomal subunit"/>
    <property type="evidence" value="ECO:0007669"/>
    <property type="project" value="TreeGrafter"/>
</dbReference>
<dbReference type="GO" id="GO:0019843">
    <property type="term" value="F:rRNA binding"/>
    <property type="evidence" value="ECO:0007669"/>
    <property type="project" value="UniProtKB-UniRule"/>
</dbReference>
<dbReference type="GO" id="GO:0003735">
    <property type="term" value="F:structural constituent of ribosome"/>
    <property type="evidence" value="ECO:0007669"/>
    <property type="project" value="InterPro"/>
</dbReference>
<dbReference type="GO" id="GO:0008270">
    <property type="term" value="F:zinc ion binding"/>
    <property type="evidence" value="ECO:0007669"/>
    <property type="project" value="UniProtKB-UniRule"/>
</dbReference>
<dbReference type="GO" id="GO:0006412">
    <property type="term" value="P:translation"/>
    <property type="evidence" value="ECO:0007669"/>
    <property type="project" value="UniProtKB-UniRule"/>
</dbReference>
<dbReference type="FunFam" id="4.10.830.10:FF:000001">
    <property type="entry name" value="30S ribosomal protein S14 type Z"/>
    <property type="match status" value="1"/>
</dbReference>
<dbReference type="Gene3D" id="4.10.830.10">
    <property type="entry name" value="30s Ribosomal Protein S14, Chain N"/>
    <property type="match status" value="1"/>
</dbReference>
<dbReference type="HAMAP" id="MF_01364_B">
    <property type="entry name" value="Ribosomal_uS14_2_B"/>
    <property type="match status" value="1"/>
</dbReference>
<dbReference type="InterPro" id="IPR001209">
    <property type="entry name" value="Ribosomal_uS14"/>
</dbReference>
<dbReference type="InterPro" id="IPR023053">
    <property type="entry name" value="Ribosomal_uS14_bact"/>
</dbReference>
<dbReference type="InterPro" id="IPR018271">
    <property type="entry name" value="Ribosomal_uS14_CS"/>
</dbReference>
<dbReference type="InterPro" id="IPR043140">
    <property type="entry name" value="Ribosomal_uS14_sf"/>
</dbReference>
<dbReference type="NCBIfam" id="NF005974">
    <property type="entry name" value="PRK08061.1"/>
    <property type="match status" value="1"/>
</dbReference>
<dbReference type="PANTHER" id="PTHR19836">
    <property type="entry name" value="30S RIBOSOMAL PROTEIN S14"/>
    <property type="match status" value="1"/>
</dbReference>
<dbReference type="PANTHER" id="PTHR19836:SF19">
    <property type="entry name" value="SMALL RIBOSOMAL SUBUNIT PROTEIN US14M"/>
    <property type="match status" value="1"/>
</dbReference>
<dbReference type="Pfam" id="PF00253">
    <property type="entry name" value="Ribosomal_S14"/>
    <property type="match status" value="1"/>
</dbReference>
<dbReference type="SUPFAM" id="SSF57716">
    <property type="entry name" value="Glucocorticoid receptor-like (DNA-binding domain)"/>
    <property type="match status" value="1"/>
</dbReference>
<dbReference type="PROSITE" id="PS00527">
    <property type="entry name" value="RIBOSOMAL_S14"/>
    <property type="match status" value="1"/>
</dbReference>
<name>RS14Z_DEIGD</name>
<reference key="1">
    <citation type="submission" date="2006-04" db="EMBL/GenBank/DDBJ databases">
        <title>Complete sequence of chromosome of Deinococcus geothermalis DSM 11300.</title>
        <authorList>
            <person name="Copeland A."/>
            <person name="Lucas S."/>
            <person name="Lapidus A."/>
            <person name="Barry K."/>
            <person name="Detter J.C."/>
            <person name="Glavina del Rio T."/>
            <person name="Hammon N."/>
            <person name="Israni S."/>
            <person name="Dalin E."/>
            <person name="Tice H."/>
            <person name="Pitluck S."/>
            <person name="Brettin T."/>
            <person name="Bruce D."/>
            <person name="Han C."/>
            <person name="Tapia R."/>
            <person name="Saunders E."/>
            <person name="Gilna P."/>
            <person name="Schmutz J."/>
            <person name="Larimer F."/>
            <person name="Land M."/>
            <person name="Hauser L."/>
            <person name="Kyrpides N."/>
            <person name="Kim E."/>
            <person name="Daly M.J."/>
            <person name="Fredrickson J.K."/>
            <person name="Makarova K.S."/>
            <person name="Gaidamakova E.K."/>
            <person name="Zhai M."/>
            <person name="Richardson P."/>
        </authorList>
    </citation>
    <scope>NUCLEOTIDE SEQUENCE [LARGE SCALE GENOMIC DNA]</scope>
    <source>
        <strain>DSM 11300 / CIP 105573 / AG-3a</strain>
    </source>
</reference>
<sequence length="61" mass="6980">MANTSKVVKAARGHKFAVQNYNRCSRCGRARGYYRFFGMCRICIRELAHKGELPGVKKASW</sequence>